<evidence type="ECO:0000255" key="1">
    <source>
        <dbReference type="HAMAP-Rule" id="MF_00285"/>
    </source>
</evidence>
<proteinExistence type="inferred from homology"/>
<accession>Q6G7N3</accession>
<dbReference type="EC" id="7.2.2.6" evidence="1"/>
<dbReference type="EMBL" id="BX571857">
    <property type="protein sequence ID" value="CAG43788.1"/>
    <property type="molecule type" value="Genomic_DNA"/>
</dbReference>
<dbReference type="RefSeq" id="WP_000546599.1">
    <property type="nucleotide sequence ID" value="NC_002953.3"/>
</dbReference>
<dbReference type="SMR" id="Q6G7N3"/>
<dbReference type="KEGG" id="sas:SAS1981"/>
<dbReference type="HOGENOM" id="CLU_025728_2_0_9"/>
<dbReference type="GO" id="GO:0005886">
    <property type="term" value="C:plasma membrane"/>
    <property type="evidence" value="ECO:0007669"/>
    <property type="project" value="UniProtKB-SubCell"/>
</dbReference>
<dbReference type="GO" id="GO:0005524">
    <property type="term" value="F:ATP binding"/>
    <property type="evidence" value="ECO:0007669"/>
    <property type="project" value="UniProtKB-UniRule"/>
</dbReference>
<dbReference type="GO" id="GO:0016887">
    <property type="term" value="F:ATP hydrolysis activity"/>
    <property type="evidence" value="ECO:0007669"/>
    <property type="project" value="InterPro"/>
</dbReference>
<dbReference type="GO" id="GO:0000287">
    <property type="term" value="F:magnesium ion binding"/>
    <property type="evidence" value="ECO:0007669"/>
    <property type="project" value="UniProtKB-UniRule"/>
</dbReference>
<dbReference type="GO" id="GO:0008556">
    <property type="term" value="F:P-type potassium transmembrane transporter activity"/>
    <property type="evidence" value="ECO:0007669"/>
    <property type="project" value="UniProtKB-UniRule"/>
</dbReference>
<dbReference type="FunFam" id="2.70.150.10:FF:000010">
    <property type="entry name" value="Potassium-transporting ATPase ATP-binding subunit"/>
    <property type="match status" value="1"/>
</dbReference>
<dbReference type="FunFam" id="3.40.1110.10:FF:000007">
    <property type="entry name" value="Potassium-transporting ATPase ATP-binding subunit"/>
    <property type="match status" value="1"/>
</dbReference>
<dbReference type="Gene3D" id="3.40.1110.10">
    <property type="entry name" value="Calcium-transporting ATPase, cytoplasmic domain N"/>
    <property type="match status" value="1"/>
</dbReference>
<dbReference type="Gene3D" id="2.70.150.10">
    <property type="entry name" value="Calcium-transporting ATPase, cytoplasmic transduction domain A"/>
    <property type="match status" value="1"/>
</dbReference>
<dbReference type="Gene3D" id="3.40.50.1000">
    <property type="entry name" value="HAD superfamily/HAD-like"/>
    <property type="match status" value="1"/>
</dbReference>
<dbReference type="HAMAP" id="MF_00285">
    <property type="entry name" value="KdpB"/>
    <property type="match status" value="1"/>
</dbReference>
<dbReference type="InterPro" id="IPR023299">
    <property type="entry name" value="ATPase_P-typ_cyto_dom_N"/>
</dbReference>
<dbReference type="InterPro" id="IPR018303">
    <property type="entry name" value="ATPase_P-typ_P_site"/>
</dbReference>
<dbReference type="InterPro" id="IPR023298">
    <property type="entry name" value="ATPase_P-typ_TM_dom_sf"/>
</dbReference>
<dbReference type="InterPro" id="IPR008250">
    <property type="entry name" value="ATPase_P-typ_transduc_dom_A_sf"/>
</dbReference>
<dbReference type="InterPro" id="IPR036412">
    <property type="entry name" value="HAD-like_sf"/>
</dbReference>
<dbReference type="InterPro" id="IPR023214">
    <property type="entry name" value="HAD_sf"/>
</dbReference>
<dbReference type="InterPro" id="IPR006391">
    <property type="entry name" value="P-type_ATPase_bsu_IA"/>
</dbReference>
<dbReference type="InterPro" id="IPR001757">
    <property type="entry name" value="P_typ_ATPase"/>
</dbReference>
<dbReference type="InterPro" id="IPR044492">
    <property type="entry name" value="P_typ_ATPase_HD_dom"/>
</dbReference>
<dbReference type="NCBIfam" id="TIGR01494">
    <property type="entry name" value="ATPase_P-type"/>
    <property type="match status" value="2"/>
</dbReference>
<dbReference type="NCBIfam" id="TIGR01497">
    <property type="entry name" value="kdpB"/>
    <property type="match status" value="1"/>
</dbReference>
<dbReference type="PANTHER" id="PTHR43743">
    <property type="entry name" value="POTASSIUM-TRANSPORTING ATPASE ATP-BINDING SUBUNIT"/>
    <property type="match status" value="1"/>
</dbReference>
<dbReference type="PANTHER" id="PTHR43743:SF1">
    <property type="entry name" value="POTASSIUM-TRANSPORTING ATPASE ATP-BINDING SUBUNIT"/>
    <property type="match status" value="1"/>
</dbReference>
<dbReference type="Pfam" id="PF00122">
    <property type="entry name" value="E1-E2_ATPase"/>
    <property type="match status" value="1"/>
</dbReference>
<dbReference type="Pfam" id="PF00702">
    <property type="entry name" value="Hydrolase"/>
    <property type="match status" value="1"/>
</dbReference>
<dbReference type="PRINTS" id="PR00119">
    <property type="entry name" value="CATATPASE"/>
</dbReference>
<dbReference type="SFLD" id="SFLDS00003">
    <property type="entry name" value="Haloacid_Dehalogenase"/>
    <property type="match status" value="1"/>
</dbReference>
<dbReference type="SFLD" id="SFLDF00027">
    <property type="entry name" value="p-type_atpase"/>
    <property type="match status" value="1"/>
</dbReference>
<dbReference type="SUPFAM" id="SSF81653">
    <property type="entry name" value="Calcium ATPase, transduction domain A"/>
    <property type="match status" value="1"/>
</dbReference>
<dbReference type="SUPFAM" id="SSF81665">
    <property type="entry name" value="Calcium ATPase, transmembrane domain M"/>
    <property type="match status" value="1"/>
</dbReference>
<dbReference type="SUPFAM" id="SSF56784">
    <property type="entry name" value="HAD-like"/>
    <property type="match status" value="1"/>
</dbReference>
<dbReference type="PROSITE" id="PS00154">
    <property type="entry name" value="ATPASE_E1_E2"/>
    <property type="match status" value="1"/>
</dbReference>
<reference key="1">
    <citation type="journal article" date="2004" name="Proc. Natl. Acad. Sci. U.S.A.">
        <title>Complete genomes of two clinical Staphylococcus aureus strains: evidence for the rapid evolution of virulence and drug resistance.</title>
        <authorList>
            <person name="Holden M.T.G."/>
            <person name="Feil E.J."/>
            <person name="Lindsay J.A."/>
            <person name="Peacock S.J."/>
            <person name="Day N.P.J."/>
            <person name="Enright M.C."/>
            <person name="Foster T.J."/>
            <person name="Moore C.E."/>
            <person name="Hurst L."/>
            <person name="Atkin R."/>
            <person name="Barron A."/>
            <person name="Bason N."/>
            <person name="Bentley S.D."/>
            <person name="Chillingworth C."/>
            <person name="Chillingworth T."/>
            <person name="Churcher C."/>
            <person name="Clark L."/>
            <person name="Corton C."/>
            <person name="Cronin A."/>
            <person name="Doggett J."/>
            <person name="Dowd L."/>
            <person name="Feltwell T."/>
            <person name="Hance Z."/>
            <person name="Harris B."/>
            <person name="Hauser H."/>
            <person name="Holroyd S."/>
            <person name="Jagels K."/>
            <person name="James K.D."/>
            <person name="Lennard N."/>
            <person name="Line A."/>
            <person name="Mayes R."/>
            <person name="Moule S."/>
            <person name="Mungall K."/>
            <person name="Ormond D."/>
            <person name="Quail M.A."/>
            <person name="Rabbinowitsch E."/>
            <person name="Rutherford K.M."/>
            <person name="Sanders M."/>
            <person name="Sharp S."/>
            <person name="Simmonds M."/>
            <person name="Stevens K."/>
            <person name="Whitehead S."/>
            <person name="Barrell B.G."/>
            <person name="Spratt B.G."/>
            <person name="Parkhill J."/>
        </authorList>
    </citation>
    <scope>NUCLEOTIDE SEQUENCE [LARGE SCALE GENOMIC DNA]</scope>
    <source>
        <strain>MSSA476</strain>
    </source>
</reference>
<keyword id="KW-0067">ATP-binding</keyword>
<keyword id="KW-1003">Cell membrane</keyword>
<keyword id="KW-0406">Ion transport</keyword>
<keyword id="KW-0460">Magnesium</keyword>
<keyword id="KW-0472">Membrane</keyword>
<keyword id="KW-0479">Metal-binding</keyword>
<keyword id="KW-0547">Nucleotide-binding</keyword>
<keyword id="KW-0597">Phosphoprotein</keyword>
<keyword id="KW-0630">Potassium</keyword>
<keyword id="KW-0633">Potassium transport</keyword>
<keyword id="KW-1278">Translocase</keyword>
<keyword id="KW-0812">Transmembrane</keyword>
<keyword id="KW-1133">Transmembrane helix</keyword>
<keyword id="KW-0813">Transport</keyword>
<organism>
    <name type="scientific">Staphylococcus aureus (strain MSSA476)</name>
    <dbReference type="NCBI Taxonomy" id="282459"/>
    <lineage>
        <taxon>Bacteria</taxon>
        <taxon>Bacillati</taxon>
        <taxon>Bacillota</taxon>
        <taxon>Bacilli</taxon>
        <taxon>Bacillales</taxon>
        <taxon>Staphylococcaceae</taxon>
        <taxon>Staphylococcus</taxon>
    </lineage>
</organism>
<gene>
    <name evidence="1" type="primary">kdpB</name>
    <name type="ordered locus">SAS1981</name>
</gene>
<sequence length="675" mass="73141">MHHVNKYFNQTMVIEALKMSFYKLNPKQLIKNPIMFVVEVGMILTLILICFPDIFGTSYLSRGYLITIFIILLITILFANFSEAFAEGRGKAQADSLRQAQSNLTARLIEENGAYRIVNATELKAGQNIRVENGETIPADGVVINGLATVDESAITGESAPVIKESGGDFDGVIGGTLVTSDWLEIRVESEAGTSFLDKMIALVEGAERNKTPNEIALFTLLTTLTIIFLVVIVTLYPIASYLHLILPIAMLIALTVCLIPTTIGGLLSAIGIAGMDRVTQFNVLAKSGRAVEVCGDVDVMILDKTGTITYGNRIASEFLPVNQQMLEKLIVAAYMSSIYDDTPEGKSIVRLAKQMYINELPKDIDGTYKTFTAETRMSGIITNEISVFKGAPNSMINLVKQQQGNIPLNIESLCMDVSSKGGTPLIVIENNVMLGVIYLKDVIKDGLVERFTELRKMGIETVMCTGDNALTAATIAKEAGVDRFVAECKPEDKIKVIKDEQAKGHIVAMTGDGTNDAPALAQANIGLAMNSGTISAKEAANLIDLDSNPTKLIEVVKIGKQLLMTRGALTTFSLANDVAKYFAILPALMMSTIPEMTSLNIMHLSSPKSAIISALIFNALIIVALIPIAMKGVKVKGYSIDRIFINNMLIYGLGGLIVPFLGIKLIDMIVQFFV</sequence>
<name>KDPB_STAAS</name>
<feature type="chain" id="PRO_0000046141" description="Potassium-transporting ATPase ATP-binding subunit">
    <location>
        <begin position="1"/>
        <end position="675"/>
    </location>
</feature>
<feature type="transmembrane region" description="Helical" evidence="1">
    <location>
        <begin position="34"/>
        <end position="54"/>
    </location>
</feature>
<feature type="transmembrane region" description="Helical" evidence="1">
    <location>
        <begin position="65"/>
        <end position="85"/>
    </location>
</feature>
<feature type="transmembrane region" description="Helical" evidence="1">
    <location>
        <begin position="216"/>
        <end position="236"/>
    </location>
</feature>
<feature type="transmembrane region" description="Helical" evidence="1">
    <location>
        <begin position="245"/>
        <end position="265"/>
    </location>
</feature>
<feature type="transmembrane region" description="Helical" evidence="1">
    <location>
        <begin position="569"/>
        <end position="591"/>
    </location>
</feature>
<feature type="transmembrane region" description="Helical" evidence="1">
    <location>
        <begin position="611"/>
        <end position="631"/>
    </location>
</feature>
<feature type="transmembrane region" description="Helical" evidence="1">
    <location>
        <begin position="644"/>
        <end position="664"/>
    </location>
</feature>
<feature type="active site" description="4-aspartylphosphate intermediate" evidence="1">
    <location>
        <position position="304"/>
    </location>
</feature>
<feature type="binding site" evidence="1">
    <location>
        <position position="341"/>
    </location>
    <ligand>
        <name>ATP</name>
        <dbReference type="ChEBI" id="CHEBI:30616"/>
    </ligand>
</feature>
<feature type="binding site" evidence="1">
    <location>
        <position position="345"/>
    </location>
    <ligand>
        <name>ATP</name>
        <dbReference type="ChEBI" id="CHEBI:30616"/>
    </ligand>
</feature>
<feature type="binding site" evidence="1">
    <location>
        <begin position="372"/>
        <end position="379"/>
    </location>
    <ligand>
        <name>ATP</name>
        <dbReference type="ChEBI" id="CHEBI:30616"/>
    </ligand>
</feature>
<feature type="binding site" evidence="1">
    <location>
        <position position="390"/>
    </location>
    <ligand>
        <name>ATP</name>
        <dbReference type="ChEBI" id="CHEBI:30616"/>
    </ligand>
</feature>
<feature type="binding site" evidence="1">
    <location>
        <position position="513"/>
    </location>
    <ligand>
        <name>Mg(2+)</name>
        <dbReference type="ChEBI" id="CHEBI:18420"/>
    </ligand>
</feature>
<feature type="binding site" evidence="1">
    <location>
        <position position="517"/>
    </location>
    <ligand>
        <name>Mg(2+)</name>
        <dbReference type="ChEBI" id="CHEBI:18420"/>
    </ligand>
</feature>
<comment type="function">
    <text evidence="1">Part of the high-affinity ATP-driven potassium transport (or Kdp) system, which catalyzes the hydrolysis of ATP coupled with the electrogenic transport of potassium into the cytoplasm. This subunit is responsible for energy coupling to the transport system and for the release of the potassium ions to the cytoplasm.</text>
</comment>
<comment type="catalytic activity">
    <reaction evidence="1">
        <text>K(+)(out) + ATP + H2O = K(+)(in) + ADP + phosphate + H(+)</text>
        <dbReference type="Rhea" id="RHEA:16777"/>
        <dbReference type="ChEBI" id="CHEBI:15377"/>
        <dbReference type="ChEBI" id="CHEBI:15378"/>
        <dbReference type="ChEBI" id="CHEBI:29103"/>
        <dbReference type="ChEBI" id="CHEBI:30616"/>
        <dbReference type="ChEBI" id="CHEBI:43474"/>
        <dbReference type="ChEBI" id="CHEBI:456216"/>
        <dbReference type="EC" id="7.2.2.6"/>
    </reaction>
    <physiologicalReaction direction="left-to-right" evidence="1">
        <dbReference type="Rhea" id="RHEA:16778"/>
    </physiologicalReaction>
</comment>
<comment type="subunit">
    <text evidence="1">The system is composed of three essential subunits: KdpA, KdpB and KdpC.</text>
</comment>
<comment type="subcellular location">
    <subcellularLocation>
        <location evidence="1">Cell membrane</location>
        <topology evidence="1">Multi-pass membrane protein</topology>
    </subcellularLocation>
</comment>
<comment type="similarity">
    <text evidence="1">Belongs to the cation transport ATPase (P-type) (TC 3.A.3) family. Type IA subfamily.</text>
</comment>
<protein>
    <recommendedName>
        <fullName evidence="1">Potassium-transporting ATPase ATP-binding subunit</fullName>
        <ecNumber evidence="1">7.2.2.6</ecNumber>
    </recommendedName>
    <alternativeName>
        <fullName evidence="1">ATP phosphohydrolase [potassium-transporting] B chain</fullName>
    </alternativeName>
    <alternativeName>
        <fullName evidence="1">Potassium-binding and translocating subunit B</fullName>
    </alternativeName>
    <alternativeName>
        <fullName evidence="1">Potassium-translocating ATPase B chain</fullName>
    </alternativeName>
</protein>